<evidence type="ECO:0000250" key="1">
    <source>
        <dbReference type="UniProtKB" id="Q6P6M7"/>
    </source>
</evidence>
<evidence type="ECO:0000250" key="2">
    <source>
        <dbReference type="UniProtKB" id="Q9HD40"/>
    </source>
</evidence>
<evidence type="ECO:0000256" key="3">
    <source>
        <dbReference type="SAM" id="MobiDB-lite"/>
    </source>
</evidence>
<evidence type="ECO:0000305" key="4"/>
<comment type="function">
    <text evidence="2">Converts O-phosphoseryl-tRNA(Sec) to selenocysteinyl-tRNA(Sec) required for selenoprotein biosynthesis.</text>
</comment>
<comment type="catalytic activity">
    <reaction evidence="2">
        <text>O-phospho-L-seryl-tRNA(Sec) + selenophosphate + H2O = L-selenocysteinyl-tRNA(Sec) + 2 phosphate</text>
        <dbReference type="Rhea" id="RHEA:25041"/>
        <dbReference type="Rhea" id="RHEA-COMP:9743"/>
        <dbReference type="Rhea" id="RHEA-COMP:9947"/>
        <dbReference type="ChEBI" id="CHEBI:15377"/>
        <dbReference type="ChEBI" id="CHEBI:16144"/>
        <dbReference type="ChEBI" id="CHEBI:43474"/>
        <dbReference type="ChEBI" id="CHEBI:78551"/>
        <dbReference type="ChEBI" id="CHEBI:78573"/>
        <dbReference type="EC" id="2.9.1.2"/>
    </reaction>
</comment>
<comment type="cofactor">
    <cofactor evidence="2">
        <name>pyridoxal 5'-phosphate</name>
        <dbReference type="ChEBI" id="CHEBI:597326"/>
    </cofactor>
</comment>
<comment type="pathway">
    <text evidence="2">Aminoacyl-tRNA biosynthesis; selenocysteinyl-tRNA(Sec) biosynthesis; selenocysteinyl-tRNA(Sec) from L-seryl-tRNA(Sec) (archaeal/eukaryal route): step 2/2.</text>
</comment>
<comment type="subunit">
    <text evidence="2">Homotetramer formed by a catalytic dimer and a non-catalytic dimer serving as a binding platform that orients tRNASec for catalysis. Each tetramer binds the CCA ends of two tRNAs which point to the active sites of the catalytic dimer.</text>
</comment>
<comment type="subcellular location">
    <subcellularLocation>
        <location evidence="2">Cytoplasm</location>
    </subcellularLocation>
</comment>
<comment type="similarity">
    <text evidence="4">Belongs to the SepSecS family.</text>
</comment>
<dbReference type="EC" id="2.9.1.2" evidence="2"/>
<dbReference type="EMBL" id="HE600998">
    <property type="protein sequence ID" value="CAP28918.3"/>
    <property type="molecule type" value="Genomic_DNA"/>
</dbReference>
<dbReference type="SMR" id="Q61JN8"/>
<dbReference type="FunCoup" id="Q61JN8">
    <property type="interactions" value="2033"/>
</dbReference>
<dbReference type="STRING" id="6238.Q61JN8"/>
<dbReference type="EnsemblMetazoa" id="CBG09712.1">
    <property type="protein sequence ID" value="CBG09712.1"/>
    <property type="gene ID" value="WBGene00031251"/>
</dbReference>
<dbReference type="KEGG" id="cbr:CBG_09712"/>
<dbReference type="CTD" id="8579187"/>
<dbReference type="WormBase" id="CBG09712">
    <property type="protein sequence ID" value="CBP02336"/>
    <property type="gene ID" value="WBGene00031251"/>
    <property type="gene designation" value="Cbr-secs-1"/>
</dbReference>
<dbReference type="eggNOG" id="KOG3843">
    <property type="taxonomic scope" value="Eukaryota"/>
</dbReference>
<dbReference type="HOGENOM" id="CLU_022508_0_0_1"/>
<dbReference type="InParanoid" id="Q61JN8"/>
<dbReference type="OMA" id="MSHANDY"/>
<dbReference type="UniPathway" id="UPA00906">
    <property type="reaction ID" value="UER00898"/>
</dbReference>
<dbReference type="Proteomes" id="UP000008549">
    <property type="component" value="Unassembled WGS sequence"/>
</dbReference>
<dbReference type="GO" id="GO:0005737">
    <property type="term" value="C:cytoplasm"/>
    <property type="evidence" value="ECO:0007669"/>
    <property type="project" value="UniProtKB-SubCell"/>
</dbReference>
<dbReference type="GO" id="GO:0042802">
    <property type="term" value="F:identical protein binding"/>
    <property type="evidence" value="ECO:0007669"/>
    <property type="project" value="EnsemblMetazoa"/>
</dbReference>
<dbReference type="GO" id="GO:0098621">
    <property type="term" value="F:O-phosphoseryl-tRNA(Sec) selenium transferase activity"/>
    <property type="evidence" value="ECO:0007669"/>
    <property type="project" value="UniProtKB-EC"/>
</dbReference>
<dbReference type="GO" id="GO:0000049">
    <property type="term" value="F:tRNA binding"/>
    <property type="evidence" value="ECO:0000318"/>
    <property type="project" value="GO_Central"/>
</dbReference>
<dbReference type="GO" id="GO:0001717">
    <property type="term" value="P:conversion of seryl-tRNAsec to selenocys-tRNAsec"/>
    <property type="evidence" value="ECO:0007669"/>
    <property type="project" value="InterPro"/>
</dbReference>
<dbReference type="GO" id="GO:0001514">
    <property type="term" value="P:selenocysteine incorporation"/>
    <property type="evidence" value="ECO:0000318"/>
    <property type="project" value="GO_Central"/>
</dbReference>
<dbReference type="FunFam" id="3.40.640.10:FF:000070">
    <property type="entry name" value="O-phosphoseryl-tRNA(Sec) selenium transferase"/>
    <property type="match status" value="1"/>
</dbReference>
<dbReference type="Gene3D" id="3.40.640.10">
    <property type="entry name" value="Type I PLP-dependent aspartate aminotransferase-like (Major domain)"/>
    <property type="match status" value="1"/>
</dbReference>
<dbReference type="InterPro" id="IPR015424">
    <property type="entry name" value="PyrdxlP-dep_Trfase"/>
</dbReference>
<dbReference type="InterPro" id="IPR015421">
    <property type="entry name" value="PyrdxlP-dep_Trfase_major"/>
</dbReference>
<dbReference type="InterPro" id="IPR019872">
    <property type="entry name" value="Sec-tRNA_Se_transferase"/>
</dbReference>
<dbReference type="InterPro" id="IPR008829">
    <property type="entry name" value="SepSecS/SepCysS"/>
</dbReference>
<dbReference type="NCBIfam" id="TIGR03531">
    <property type="entry name" value="selenium_SpcS"/>
    <property type="match status" value="1"/>
</dbReference>
<dbReference type="PANTHER" id="PTHR12944:SF2">
    <property type="entry name" value="O-PHOSPHOSERYL-TRNA(SEC) SELENIUM TRANSFERASE"/>
    <property type="match status" value="1"/>
</dbReference>
<dbReference type="PANTHER" id="PTHR12944">
    <property type="entry name" value="SOLUBLE LIVER ANTIGEN/LIVER PANCREAS ANTIGEN"/>
    <property type="match status" value="1"/>
</dbReference>
<dbReference type="Pfam" id="PF05889">
    <property type="entry name" value="SepSecS"/>
    <property type="match status" value="1"/>
</dbReference>
<dbReference type="PIRSF" id="PIRSF017689">
    <property type="entry name" value="SepSecS"/>
    <property type="match status" value="1"/>
</dbReference>
<dbReference type="SUPFAM" id="SSF53383">
    <property type="entry name" value="PLP-dependent transferases"/>
    <property type="match status" value="1"/>
</dbReference>
<sequence length="482" mass="53480">MKSSFGKKEGEYSRLVSKSSNKLLNSLWEKKQIPEEGWTEHTLDLFLSWLSSHDTNNRVDMIPVGAGEREGRVLTPLVQRLHSNLTHGIGRSGNLLEIQPKALGSSMLACLSNEFAKHALHLLGLQTVKSCIVVPLCTGMSLSLCMTSWRRRRPKAKYVIWLRIDQKSSLKSIYHAGFEAIIVEPTRDHDALVTDVETVNRIVEQRGEELLCVMTTTSCFAPRSPDNIEAISAICAAHDVPHLVNNAYGLQSEETIRKIAAAHECGRVDAVVQSLDKNFQVPVGGALIAGFKQSHIQSIAQAYPGRASSVPSRDLVLTFLYQGQSAFLEPFQKQKQMFLKMRRKLTSFAENVGECVYDVPENEISLAMTLSTIPPTKQTLFGSVLFSRGITGARVVQSSQSKTTIEGCEFVNFGSHTAEQHGGYLNIACSIGMADHELEELFTRLTSSYAKFIRQLAKEDDRRGGSSGRRVPMNESFDMEND</sequence>
<organism>
    <name type="scientific">Caenorhabditis briggsae</name>
    <dbReference type="NCBI Taxonomy" id="6238"/>
    <lineage>
        <taxon>Eukaryota</taxon>
        <taxon>Metazoa</taxon>
        <taxon>Ecdysozoa</taxon>
        <taxon>Nematoda</taxon>
        <taxon>Chromadorea</taxon>
        <taxon>Rhabditida</taxon>
        <taxon>Rhabditina</taxon>
        <taxon>Rhabditomorpha</taxon>
        <taxon>Rhabditoidea</taxon>
        <taxon>Rhabditidae</taxon>
        <taxon>Peloderinae</taxon>
        <taxon>Caenorhabditis</taxon>
    </lineage>
</organism>
<protein>
    <recommendedName>
        <fullName>O-phosphoseryl-tRNA(Sec) selenium transferase</fullName>
        <ecNumber evidence="2">2.9.1.2</ecNumber>
    </recommendedName>
    <alternativeName>
        <fullName>Selenocysteine synthase</fullName>
        <shortName>Sec synthase</shortName>
    </alternativeName>
    <alternativeName>
        <fullName>Selenocysteinyl-tRNA(Sec) synthase</fullName>
    </alternativeName>
    <alternativeName>
        <fullName>Sep-tRNA:Sec-tRNA synthase</fullName>
        <shortName>SepSecS</shortName>
    </alternativeName>
    <alternativeName>
        <fullName>UGA suppressor tRNA-associated protein homolog</fullName>
    </alternativeName>
</protein>
<gene>
    <name type="primary">secs-1</name>
    <name type="ORF">CBG09712</name>
</gene>
<accession>Q61JN8</accession>
<accession>A8X8F7</accession>
<keyword id="KW-0963">Cytoplasm</keyword>
<keyword id="KW-0648">Protein biosynthesis</keyword>
<keyword id="KW-0663">Pyridoxal phosphate</keyword>
<keyword id="KW-1185">Reference proteome</keyword>
<keyword id="KW-0694">RNA-binding</keyword>
<keyword id="KW-0711">Selenium</keyword>
<keyword id="KW-0808">Transferase</keyword>
<keyword id="KW-0820">tRNA-binding</keyword>
<reference key="1">
    <citation type="journal article" date="2003" name="PLoS Biol.">
        <title>The genome sequence of Caenorhabditis briggsae: a platform for comparative genomics.</title>
        <authorList>
            <person name="Stein L.D."/>
            <person name="Bao Z."/>
            <person name="Blasiar D."/>
            <person name="Blumenthal T."/>
            <person name="Brent M.R."/>
            <person name="Chen N."/>
            <person name="Chinwalla A."/>
            <person name="Clarke L."/>
            <person name="Clee C."/>
            <person name="Coghlan A."/>
            <person name="Coulson A."/>
            <person name="D'Eustachio P."/>
            <person name="Fitch D.H.A."/>
            <person name="Fulton L.A."/>
            <person name="Fulton R.E."/>
            <person name="Griffiths-Jones S."/>
            <person name="Harris T.W."/>
            <person name="Hillier L.W."/>
            <person name="Kamath R."/>
            <person name="Kuwabara P.E."/>
            <person name="Mardis E.R."/>
            <person name="Marra M.A."/>
            <person name="Miner T.L."/>
            <person name="Minx P."/>
            <person name="Mullikin J.C."/>
            <person name="Plumb R.W."/>
            <person name="Rogers J."/>
            <person name="Schein J.E."/>
            <person name="Sohrmann M."/>
            <person name="Spieth J."/>
            <person name="Stajich J.E."/>
            <person name="Wei C."/>
            <person name="Willey D."/>
            <person name="Wilson R.K."/>
            <person name="Durbin R.M."/>
            <person name="Waterston R.H."/>
        </authorList>
    </citation>
    <scope>NUCLEOTIDE SEQUENCE [LARGE SCALE GENOMIC DNA]</scope>
    <source>
        <strain>AF16</strain>
    </source>
</reference>
<feature type="chain" id="PRO_0000219879" description="O-phosphoseryl-tRNA(Sec) selenium transferase">
    <location>
        <begin position="1"/>
        <end position="482"/>
    </location>
</feature>
<feature type="region of interest" description="Tetramerization" evidence="2">
    <location>
        <begin position="1"/>
        <end position="36"/>
    </location>
</feature>
<feature type="region of interest" description="Phosphate loop (P-loop)" evidence="2">
    <location>
        <begin position="90"/>
        <end position="100"/>
    </location>
</feature>
<feature type="region of interest" description="Disordered" evidence="3">
    <location>
        <begin position="461"/>
        <end position="482"/>
    </location>
</feature>
<feature type="binding site" evidence="2">
    <location>
        <position position="69"/>
    </location>
    <ligand>
        <name>pyridoxal 5'-phosphate</name>
        <dbReference type="ChEBI" id="CHEBI:597326"/>
    </ligand>
</feature>
<feature type="binding site" evidence="2">
    <location>
        <position position="91"/>
    </location>
    <ligand>
        <name>substrate</name>
    </ligand>
</feature>
<feature type="binding site" evidence="2">
    <location>
        <position position="92"/>
    </location>
    <ligand>
        <name>substrate</name>
    </ligand>
</feature>
<feature type="binding site" evidence="2">
    <location>
        <position position="99"/>
    </location>
    <ligand>
        <name>substrate</name>
    </ligand>
</feature>
<feature type="binding site" evidence="2">
    <location>
        <position position="306"/>
    </location>
    <ligand>
        <name>substrate</name>
    </ligand>
</feature>
<feature type="binding site" evidence="2">
    <location>
        <position position="388"/>
    </location>
    <ligand>
        <name>tRNA</name>
        <dbReference type="ChEBI" id="CHEBI:17843"/>
    </ligand>
    <ligandPart>
        <name>tRNA discriminator base</name>
    </ligandPart>
</feature>
<feature type="site" description="May act as a substrate filter by repelling compounds with a negatively charged alpha-carboxylate" evidence="1">
    <location>
        <position position="68"/>
    </location>
</feature>
<feature type="modified residue" description="N6-(pyridoxal phosphate)lysine" evidence="2">
    <location>
        <position position="277"/>
    </location>
</feature>
<name>SPCS_CAEBR</name>
<proteinExistence type="inferred from homology"/>